<keyword id="KW-0240">DNA-directed RNA polymerase</keyword>
<keyword id="KW-0548">Nucleotidyltransferase</keyword>
<keyword id="KW-0804">Transcription</keyword>
<keyword id="KW-0808">Transferase</keyword>
<name>RPOA_YERPP</name>
<dbReference type="EC" id="2.7.7.6" evidence="1"/>
<dbReference type="EMBL" id="CP000668">
    <property type="protein sequence ID" value="ABP38578.1"/>
    <property type="molecule type" value="Genomic_DNA"/>
</dbReference>
<dbReference type="RefSeq" id="WP_002209013.1">
    <property type="nucleotide sequence ID" value="NZ_CP009715.1"/>
</dbReference>
<dbReference type="BMRB" id="A4TH15"/>
<dbReference type="SMR" id="A4TH15"/>
<dbReference type="KEGG" id="ypp:YPDSF_0156"/>
<dbReference type="PATRIC" id="fig|386656.14.peg.409"/>
<dbReference type="GO" id="GO:0005737">
    <property type="term" value="C:cytoplasm"/>
    <property type="evidence" value="ECO:0007669"/>
    <property type="project" value="UniProtKB-ARBA"/>
</dbReference>
<dbReference type="GO" id="GO:0000428">
    <property type="term" value="C:DNA-directed RNA polymerase complex"/>
    <property type="evidence" value="ECO:0007669"/>
    <property type="project" value="UniProtKB-KW"/>
</dbReference>
<dbReference type="GO" id="GO:0003677">
    <property type="term" value="F:DNA binding"/>
    <property type="evidence" value="ECO:0007669"/>
    <property type="project" value="UniProtKB-UniRule"/>
</dbReference>
<dbReference type="GO" id="GO:0003899">
    <property type="term" value="F:DNA-directed RNA polymerase activity"/>
    <property type="evidence" value="ECO:0007669"/>
    <property type="project" value="UniProtKB-UniRule"/>
</dbReference>
<dbReference type="GO" id="GO:0046983">
    <property type="term" value="F:protein dimerization activity"/>
    <property type="evidence" value="ECO:0007669"/>
    <property type="project" value="InterPro"/>
</dbReference>
<dbReference type="GO" id="GO:0006351">
    <property type="term" value="P:DNA-templated transcription"/>
    <property type="evidence" value="ECO:0007669"/>
    <property type="project" value="UniProtKB-UniRule"/>
</dbReference>
<dbReference type="CDD" id="cd06928">
    <property type="entry name" value="RNAP_alpha_NTD"/>
    <property type="match status" value="1"/>
</dbReference>
<dbReference type="FunFam" id="1.10.150.20:FF:000001">
    <property type="entry name" value="DNA-directed RNA polymerase subunit alpha"/>
    <property type="match status" value="1"/>
</dbReference>
<dbReference type="FunFam" id="2.170.120.12:FF:000001">
    <property type="entry name" value="DNA-directed RNA polymerase subunit alpha"/>
    <property type="match status" value="1"/>
</dbReference>
<dbReference type="Gene3D" id="1.10.150.20">
    <property type="entry name" value="5' to 3' exonuclease, C-terminal subdomain"/>
    <property type="match status" value="1"/>
</dbReference>
<dbReference type="Gene3D" id="2.170.120.12">
    <property type="entry name" value="DNA-directed RNA polymerase, insert domain"/>
    <property type="match status" value="1"/>
</dbReference>
<dbReference type="Gene3D" id="3.30.1360.10">
    <property type="entry name" value="RNA polymerase, RBP11-like subunit"/>
    <property type="match status" value="1"/>
</dbReference>
<dbReference type="HAMAP" id="MF_00059">
    <property type="entry name" value="RNApol_bact_RpoA"/>
    <property type="match status" value="1"/>
</dbReference>
<dbReference type="InterPro" id="IPR011262">
    <property type="entry name" value="DNA-dir_RNA_pol_insert"/>
</dbReference>
<dbReference type="InterPro" id="IPR011263">
    <property type="entry name" value="DNA-dir_RNA_pol_RpoA/D/Rpb3"/>
</dbReference>
<dbReference type="InterPro" id="IPR011773">
    <property type="entry name" value="DNA-dir_RpoA"/>
</dbReference>
<dbReference type="InterPro" id="IPR036603">
    <property type="entry name" value="RBP11-like"/>
</dbReference>
<dbReference type="InterPro" id="IPR011260">
    <property type="entry name" value="RNAP_asu_C"/>
</dbReference>
<dbReference type="InterPro" id="IPR036643">
    <property type="entry name" value="RNApol_insert_sf"/>
</dbReference>
<dbReference type="NCBIfam" id="NF003513">
    <property type="entry name" value="PRK05182.1-2"/>
    <property type="match status" value="1"/>
</dbReference>
<dbReference type="NCBIfam" id="NF003519">
    <property type="entry name" value="PRK05182.2-5"/>
    <property type="match status" value="1"/>
</dbReference>
<dbReference type="NCBIfam" id="TIGR02027">
    <property type="entry name" value="rpoA"/>
    <property type="match status" value="1"/>
</dbReference>
<dbReference type="Pfam" id="PF01000">
    <property type="entry name" value="RNA_pol_A_bac"/>
    <property type="match status" value="1"/>
</dbReference>
<dbReference type="Pfam" id="PF03118">
    <property type="entry name" value="RNA_pol_A_CTD"/>
    <property type="match status" value="1"/>
</dbReference>
<dbReference type="Pfam" id="PF01193">
    <property type="entry name" value="RNA_pol_L"/>
    <property type="match status" value="1"/>
</dbReference>
<dbReference type="SMART" id="SM00662">
    <property type="entry name" value="RPOLD"/>
    <property type="match status" value="1"/>
</dbReference>
<dbReference type="SUPFAM" id="SSF47789">
    <property type="entry name" value="C-terminal domain of RNA polymerase alpha subunit"/>
    <property type="match status" value="1"/>
</dbReference>
<dbReference type="SUPFAM" id="SSF56553">
    <property type="entry name" value="Insert subdomain of RNA polymerase alpha subunit"/>
    <property type="match status" value="1"/>
</dbReference>
<dbReference type="SUPFAM" id="SSF55257">
    <property type="entry name" value="RBP11-like subunits of RNA polymerase"/>
    <property type="match status" value="1"/>
</dbReference>
<organism>
    <name type="scientific">Yersinia pestis (strain Pestoides F)</name>
    <dbReference type="NCBI Taxonomy" id="386656"/>
    <lineage>
        <taxon>Bacteria</taxon>
        <taxon>Pseudomonadati</taxon>
        <taxon>Pseudomonadota</taxon>
        <taxon>Gammaproteobacteria</taxon>
        <taxon>Enterobacterales</taxon>
        <taxon>Yersiniaceae</taxon>
        <taxon>Yersinia</taxon>
    </lineage>
</organism>
<proteinExistence type="inferred from homology"/>
<reference key="1">
    <citation type="submission" date="2007-02" db="EMBL/GenBank/DDBJ databases">
        <title>Complete sequence of chromosome of Yersinia pestis Pestoides F.</title>
        <authorList>
            <consortium name="US DOE Joint Genome Institute"/>
            <person name="Copeland A."/>
            <person name="Lucas S."/>
            <person name="Lapidus A."/>
            <person name="Barry K."/>
            <person name="Detter J.C."/>
            <person name="Glavina del Rio T."/>
            <person name="Hammon N."/>
            <person name="Israni S."/>
            <person name="Dalin E."/>
            <person name="Tice H."/>
            <person name="Pitluck S."/>
            <person name="Di Bartolo G."/>
            <person name="Chain P."/>
            <person name="Malfatti S."/>
            <person name="Shin M."/>
            <person name="Vergez L."/>
            <person name="Schmutz J."/>
            <person name="Larimer F."/>
            <person name="Land M."/>
            <person name="Hauser L."/>
            <person name="Worsham P."/>
            <person name="Chu M."/>
            <person name="Bearden S."/>
            <person name="Garcia E."/>
            <person name="Richardson P."/>
        </authorList>
    </citation>
    <scope>NUCLEOTIDE SEQUENCE [LARGE SCALE GENOMIC DNA]</scope>
    <source>
        <strain>Pestoides F</strain>
    </source>
</reference>
<comment type="function">
    <text>DNA-dependent RNA polymerase catalyzes the transcription of DNA into RNA using the four ribonucleoside triphosphates as substrates.</text>
</comment>
<comment type="catalytic activity">
    <reaction evidence="1">
        <text>RNA(n) + a ribonucleoside 5'-triphosphate = RNA(n+1) + diphosphate</text>
        <dbReference type="Rhea" id="RHEA:21248"/>
        <dbReference type="Rhea" id="RHEA-COMP:14527"/>
        <dbReference type="Rhea" id="RHEA-COMP:17342"/>
        <dbReference type="ChEBI" id="CHEBI:33019"/>
        <dbReference type="ChEBI" id="CHEBI:61557"/>
        <dbReference type="ChEBI" id="CHEBI:140395"/>
        <dbReference type="EC" id="2.7.7.6"/>
    </reaction>
</comment>
<comment type="subunit">
    <text evidence="1">Homodimer. The RNAP catalytic core consists of 2 alpha, 1 beta, 1 beta' and 1 omega subunit. When a sigma factor is associated with the core the holoenzyme is formed, which can initiate transcription.</text>
</comment>
<comment type="domain">
    <text evidence="1">The N-terminal domain is essential for RNAP assembly and basal transcription, whereas the C-terminal domain is involved in interaction with transcriptional regulators and with upstream promoter elements.</text>
</comment>
<comment type="similarity">
    <text evidence="1">Belongs to the RNA polymerase alpha chain family.</text>
</comment>
<evidence type="ECO:0000255" key="1">
    <source>
        <dbReference type="HAMAP-Rule" id="MF_00059"/>
    </source>
</evidence>
<sequence>MQGSVTEFLKPRLVDIEQVSSTHAKVTLEPLERGFGHTLGNALRRILLSSMPGCAVTEVEIDGVLHEYSTKEGVQEDILEILLNLKGLAVRVQGKDEVILTLNKSGIGPVTAADITHDGDVEIVKPQHVICHLTDENASINMRIKVQRGRGYVPASARIHSEEDERPIGRLLVDACYSPVERIAYNVEAARVEQRTDLDKLVIEMETNGTIDPEEAIRRAATILAEQLEAFVDLRDVRQPEVKEEKPEFDPILLRPVDDLELTVRSANCLKAEAIHYIGDLVQRTEVELLKTPNLGKKSLTEIKDVLASRGLSLGMRLENWPPASIADE</sequence>
<feature type="chain" id="PRO_0000296882" description="DNA-directed RNA polymerase subunit alpha">
    <location>
        <begin position="1"/>
        <end position="329"/>
    </location>
</feature>
<feature type="region of interest" description="Alpha N-terminal domain (alpha-NTD)" evidence="1">
    <location>
        <begin position="1"/>
        <end position="235"/>
    </location>
</feature>
<feature type="region of interest" description="Alpha C-terminal domain (alpha-CTD)" evidence="1">
    <location>
        <begin position="249"/>
        <end position="329"/>
    </location>
</feature>
<accession>A4TH15</accession>
<gene>
    <name evidence="1" type="primary">rpoA</name>
    <name type="ordered locus">YPDSF_0156</name>
</gene>
<protein>
    <recommendedName>
        <fullName evidence="1">DNA-directed RNA polymerase subunit alpha</fullName>
        <shortName evidence="1">RNAP subunit alpha</shortName>
        <ecNumber evidence="1">2.7.7.6</ecNumber>
    </recommendedName>
    <alternativeName>
        <fullName evidence="1">RNA polymerase subunit alpha</fullName>
    </alternativeName>
    <alternativeName>
        <fullName evidence="1">Transcriptase subunit alpha</fullName>
    </alternativeName>
</protein>